<comment type="function">
    <text evidence="1">ATP-dependent carboxylate-amine ligase which exhibits weak glutamate--cysteine ligase activity.</text>
</comment>
<comment type="catalytic activity">
    <reaction evidence="1">
        <text>L-cysteine + L-glutamate + ATP = gamma-L-glutamyl-L-cysteine + ADP + phosphate + H(+)</text>
        <dbReference type="Rhea" id="RHEA:13285"/>
        <dbReference type="ChEBI" id="CHEBI:15378"/>
        <dbReference type="ChEBI" id="CHEBI:29985"/>
        <dbReference type="ChEBI" id="CHEBI:30616"/>
        <dbReference type="ChEBI" id="CHEBI:35235"/>
        <dbReference type="ChEBI" id="CHEBI:43474"/>
        <dbReference type="ChEBI" id="CHEBI:58173"/>
        <dbReference type="ChEBI" id="CHEBI:456216"/>
        <dbReference type="EC" id="6.3.2.2"/>
    </reaction>
</comment>
<comment type="similarity">
    <text evidence="1">Belongs to the glutamate--cysteine ligase type 2 family. YbdK subfamily.</text>
</comment>
<protein>
    <recommendedName>
        <fullName evidence="1">Putative glutamate--cysteine ligase 2-1</fullName>
        <ecNumber evidence="1">6.3.2.2</ecNumber>
    </recommendedName>
    <alternativeName>
        <fullName evidence="1">Gamma-glutamylcysteine synthetase 2-1</fullName>
        <shortName evidence="1">GCS 2-1</shortName>
        <shortName evidence="1">Gamma-GCS 2-1</shortName>
    </alternativeName>
</protein>
<proteinExistence type="inferred from homology"/>
<reference key="1">
    <citation type="journal article" date="2013" name="Stand. Genomic Sci.">
        <title>Complete genome sequence of Arthrobacter sp. strain FB24.</title>
        <authorList>
            <person name="Nakatsu C.H."/>
            <person name="Barabote R."/>
            <person name="Thompson S."/>
            <person name="Bruce D."/>
            <person name="Detter C."/>
            <person name="Brettin T."/>
            <person name="Han C."/>
            <person name="Beasley F."/>
            <person name="Chen W."/>
            <person name="Konopka A."/>
            <person name="Xie G."/>
        </authorList>
    </citation>
    <scope>NUCLEOTIDE SEQUENCE [LARGE SCALE GENOMIC DNA]</scope>
    <source>
        <strain>FB24</strain>
    </source>
</reference>
<organism>
    <name type="scientific">Arthrobacter sp. (strain FB24)</name>
    <dbReference type="NCBI Taxonomy" id="290399"/>
    <lineage>
        <taxon>Bacteria</taxon>
        <taxon>Bacillati</taxon>
        <taxon>Actinomycetota</taxon>
        <taxon>Actinomycetes</taxon>
        <taxon>Micrococcales</taxon>
        <taxon>Micrococcaceae</taxon>
        <taxon>Arthrobacter</taxon>
    </lineage>
</organism>
<sequence length="383" mass="42201">MKIDFASSRQSTLGVEWELALVNAQTGELASVANEVLRGVSANHPELNEDDEHPHIKQELLLNTVELVTGICETVAQAKADLSSSLAAVREVTDPMGVEVFCAGSHPFSPPQLQPVTDKARYAKLIDRTQWWGRQMVIYGVHVHVGLDSRDKVLPVLDGLVNYFPHFQALSASSPFWGGEDTGYASQRALMFQQLPTAGLPFQFSTWAEYESYVQDMFTTGVIDTISEIRWDIRPVPNLGTIEMRICDGLATLEEVGAIAALTQCLVDEFSTILDNGGTIPTMPPWHVQENKWRAARYGLEAIIILDAEGNEQLVTDHLLETLNRLEPVAAKLGCSDELADVEKIISRGAGYQRQRRVAAEHGGDLRAVVLDLVKQMRNGPTA</sequence>
<feature type="chain" id="PRO_0000291484" description="Putative glutamate--cysteine ligase 2-1">
    <location>
        <begin position="1"/>
        <end position="383"/>
    </location>
</feature>
<dbReference type="EC" id="6.3.2.2" evidence="1"/>
<dbReference type="EMBL" id="CP000454">
    <property type="protein sequence ID" value="ABK04270.1"/>
    <property type="molecule type" value="Genomic_DNA"/>
</dbReference>
<dbReference type="RefSeq" id="WP_011692729.1">
    <property type="nucleotide sequence ID" value="NC_008541.1"/>
</dbReference>
<dbReference type="SMR" id="A0JZ00"/>
<dbReference type="STRING" id="290399.Arth_2891"/>
<dbReference type="KEGG" id="art:Arth_2891"/>
<dbReference type="eggNOG" id="COG2170">
    <property type="taxonomic scope" value="Bacteria"/>
</dbReference>
<dbReference type="HOGENOM" id="CLU_044848_1_0_11"/>
<dbReference type="OrthoDB" id="9769628at2"/>
<dbReference type="Proteomes" id="UP000000754">
    <property type="component" value="Chromosome"/>
</dbReference>
<dbReference type="GO" id="GO:0005524">
    <property type="term" value="F:ATP binding"/>
    <property type="evidence" value="ECO:0007669"/>
    <property type="project" value="UniProtKB-KW"/>
</dbReference>
<dbReference type="GO" id="GO:0004357">
    <property type="term" value="F:glutamate-cysteine ligase activity"/>
    <property type="evidence" value="ECO:0007669"/>
    <property type="project" value="UniProtKB-EC"/>
</dbReference>
<dbReference type="GO" id="GO:0042398">
    <property type="term" value="P:modified amino acid biosynthetic process"/>
    <property type="evidence" value="ECO:0007669"/>
    <property type="project" value="InterPro"/>
</dbReference>
<dbReference type="Gene3D" id="3.30.590.20">
    <property type="match status" value="1"/>
</dbReference>
<dbReference type="HAMAP" id="MF_01609">
    <property type="entry name" value="Glu_cys_ligase_2"/>
    <property type="match status" value="1"/>
</dbReference>
<dbReference type="InterPro" id="IPR050141">
    <property type="entry name" value="GCL_type2/YbdK_subfam"/>
</dbReference>
<dbReference type="InterPro" id="IPR006336">
    <property type="entry name" value="GCS2"/>
</dbReference>
<dbReference type="InterPro" id="IPR014746">
    <property type="entry name" value="Gln_synth/guanido_kin_cat_dom"/>
</dbReference>
<dbReference type="InterPro" id="IPR011793">
    <property type="entry name" value="YbdK"/>
</dbReference>
<dbReference type="NCBIfam" id="TIGR02050">
    <property type="entry name" value="gshA_cyan_rel"/>
    <property type="match status" value="1"/>
</dbReference>
<dbReference type="NCBIfam" id="NF010042">
    <property type="entry name" value="PRK13517.1-2"/>
    <property type="match status" value="1"/>
</dbReference>
<dbReference type="NCBIfam" id="NF010043">
    <property type="entry name" value="PRK13517.1-3"/>
    <property type="match status" value="1"/>
</dbReference>
<dbReference type="NCBIfam" id="NF010044">
    <property type="entry name" value="PRK13517.1-4"/>
    <property type="match status" value="1"/>
</dbReference>
<dbReference type="PANTHER" id="PTHR36510">
    <property type="entry name" value="GLUTAMATE--CYSTEINE LIGASE 2-RELATED"/>
    <property type="match status" value="1"/>
</dbReference>
<dbReference type="PANTHER" id="PTHR36510:SF1">
    <property type="entry name" value="GLUTAMATE--CYSTEINE LIGASE 2-RELATED"/>
    <property type="match status" value="1"/>
</dbReference>
<dbReference type="Pfam" id="PF04107">
    <property type="entry name" value="GCS2"/>
    <property type="match status" value="1"/>
</dbReference>
<dbReference type="SUPFAM" id="SSF55931">
    <property type="entry name" value="Glutamine synthetase/guanido kinase"/>
    <property type="match status" value="1"/>
</dbReference>
<name>GCS21_ARTS2</name>
<accession>A0JZ00</accession>
<keyword id="KW-0067">ATP-binding</keyword>
<keyword id="KW-0436">Ligase</keyword>
<keyword id="KW-0547">Nucleotide-binding</keyword>
<keyword id="KW-1185">Reference proteome</keyword>
<evidence type="ECO:0000255" key="1">
    <source>
        <dbReference type="HAMAP-Rule" id="MF_01609"/>
    </source>
</evidence>
<gene>
    <name type="ordered locus">Arth_2891</name>
</gene>